<dbReference type="EMBL" id="Z83102">
    <property type="protein sequence ID" value="CAB05462.2"/>
    <property type="molecule type" value="Genomic_DNA"/>
</dbReference>
<dbReference type="PIR" id="T20200">
    <property type="entry name" value="T20200"/>
</dbReference>
<dbReference type="RefSeq" id="NP_493156.2">
    <property type="nucleotide sequence ID" value="NM_060755.3"/>
</dbReference>
<dbReference type="SMR" id="O17706"/>
<dbReference type="BioGRID" id="48578">
    <property type="interactions" value="1"/>
</dbReference>
<dbReference type="FunCoup" id="O17706">
    <property type="interactions" value="173"/>
</dbReference>
<dbReference type="IntAct" id="O17706">
    <property type="interactions" value="1"/>
</dbReference>
<dbReference type="STRING" id="6239.C54C8.1.1"/>
<dbReference type="PaxDb" id="6239-C54C8.1"/>
<dbReference type="EnsemblMetazoa" id="C54C8.1.1">
    <property type="protein sequence ID" value="C54C8.1.1"/>
    <property type="gene ID" value="WBGene00008289"/>
</dbReference>
<dbReference type="GeneID" id="183768"/>
<dbReference type="KEGG" id="cel:CELE_C54C8.1"/>
<dbReference type="UCSC" id="C54C8.1">
    <property type="organism name" value="c. elegans"/>
</dbReference>
<dbReference type="AGR" id="WB:WBGene00008289"/>
<dbReference type="CTD" id="183768"/>
<dbReference type="WormBase" id="C54C8.1">
    <property type="protein sequence ID" value="CE36114"/>
    <property type="gene ID" value="WBGene00008289"/>
    <property type="gene designation" value="nhr-169"/>
</dbReference>
<dbReference type="eggNOG" id="KOG3575">
    <property type="taxonomic scope" value="Eukaryota"/>
</dbReference>
<dbReference type="GeneTree" id="ENSGT00970000195849"/>
<dbReference type="HOGENOM" id="CLU_066719_0_0_1"/>
<dbReference type="InParanoid" id="O17706"/>
<dbReference type="OrthoDB" id="9996608at2759"/>
<dbReference type="PhylomeDB" id="O17706"/>
<dbReference type="PRO" id="PR:O17706"/>
<dbReference type="Proteomes" id="UP000001940">
    <property type="component" value="Chromosome I"/>
</dbReference>
<dbReference type="GO" id="GO:0005634">
    <property type="term" value="C:nucleus"/>
    <property type="evidence" value="ECO:0007669"/>
    <property type="project" value="UniProtKB-SubCell"/>
</dbReference>
<dbReference type="GO" id="GO:0003700">
    <property type="term" value="F:DNA-binding transcription factor activity"/>
    <property type="evidence" value="ECO:0007669"/>
    <property type="project" value="InterPro"/>
</dbReference>
<dbReference type="GO" id="GO:0043565">
    <property type="term" value="F:sequence-specific DNA binding"/>
    <property type="evidence" value="ECO:0007669"/>
    <property type="project" value="InterPro"/>
</dbReference>
<dbReference type="GO" id="GO:0008270">
    <property type="term" value="F:zinc ion binding"/>
    <property type="evidence" value="ECO:0007669"/>
    <property type="project" value="UniProtKB-KW"/>
</dbReference>
<dbReference type="Gene3D" id="3.30.50.10">
    <property type="entry name" value="Erythroid Transcription Factor GATA-1, subunit A"/>
    <property type="match status" value="1"/>
</dbReference>
<dbReference type="Gene3D" id="1.10.565.10">
    <property type="entry name" value="Retinoid X Receptor"/>
    <property type="match status" value="1"/>
</dbReference>
<dbReference type="InterPro" id="IPR035500">
    <property type="entry name" value="NHR-like_dom_sf"/>
</dbReference>
<dbReference type="InterPro" id="IPR000536">
    <property type="entry name" value="Nucl_hrmn_rcpt_lig-bd"/>
</dbReference>
<dbReference type="InterPro" id="IPR001628">
    <property type="entry name" value="Znf_hrmn_rcpt"/>
</dbReference>
<dbReference type="InterPro" id="IPR013088">
    <property type="entry name" value="Znf_NHR/GATA"/>
</dbReference>
<dbReference type="PANTHER" id="PTHR46397:SF3">
    <property type="entry name" value="NR LBD DOMAIN-CONTAINING PROTEIN-RELATED"/>
    <property type="match status" value="1"/>
</dbReference>
<dbReference type="PANTHER" id="PTHR46397">
    <property type="entry name" value="NUCLEAR HORMONE RECEPTOR FAMILY-RELATED"/>
    <property type="match status" value="1"/>
</dbReference>
<dbReference type="Pfam" id="PF00104">
    <property type="entry name" value="Hormone_recep"/>
    <property type="match status" value="1"/>
</dbReference>
<dbReference type="Pfam" id="PF00105">
    <property type="entry name" value="zf-C4"/>
    <property type="match status" value="1"/>
</dbReference>
<dbReference type="SMART" id="SM00430">
    <property type="entry name" value="HOLI"/>
    <property type="match status" value="1"/>
</dbReference>
<dbReference type="SMART" id="SM00399">
    <property type="entry name" value="ZnF_C4"/>
    <property type="match status" value="1"/>
</dbReference>
<dbReference type="SUPFAM" id="SSF57716">
    <property type="entry name" value="Glucocorticoid receptor-like (DNA-binding domain)"/>
    <property type="match status" value="1"/>
</dbReference>
<dbReference type="SUPFAM" id="SSF48508">
    <property type="entry name" value="Nuclear receptor ligand-binding domain"/>
    <property type="match status" value="1"/>
</dbReference>
<dbReference type="PROSITE" id="PS51843">
    <property type="entry name" value="NR_LBD"/>
    <property type="match status" value="1"/>
</dbReference>
<dbReference type="PROSITE" id="PS00031">
    <property type="entry name" value="NUCLEAR_REC_DBD_1"/>
    <property type="match status" value="1"/>
</dbReference>
<dbReference type="PROSITE" id="PS51030">
    <property type="entry name" value="NUCLEAR_REC_DBD_2"/>
    <property type="match status" value="1"/>
</dbReference>
<proteinExistence type="inferred from homology"/>
<evidence type="ECO:0000255" key="1">
    <source>
        <dbReference type="PROSITE-ProRule" id="PRU00407"/>
    </source>
</evidence>
<evidence type="ECO:0000255" key="2">
    <source>
        <dbReference type="PROSITE-ProRule" id="PRU01189"/>
    </source>
</evidence>
<evidence type="ECO:0000305" key="3"/>
<keyword id="KW-0238">DNA-binding</keyword>
<keyword id="KW-0479">Metal-binding</keyword>
<keyword id="KW-0539">Nucleus</keyword>
<keyword id="KW-0675">Receptor</keyword>
<keyword id="KW-1185">Reference proteome</keyword>
<keyword id="KW-0804">Transcription</keyword>
<keyword id="KW-0805">Transcription regulation</keyword>
<keyword id="KW-0862">Zinc</keyword>
<keyword id="KW-0863">Zinc-finger</keyword>
<reference key="1">
    <citation type="journal article" date="1998" name="Science">
        <title>Genome sequence of the nematode C. elegans: a platform for investigating biology.</title>
        <authorList>
            <consortium name="The C. elegans sequencing consortium"/>
        </authorList>
    </citation>
    <scope>NUCLEOTIDE SEQUENCE [LARGE SCALE GENOMIC DNA]</scope>
    <source>
        <strain>Bristol N2</strain>
    </source>
</reference>
<feature type="chain" id="PRO_0000223601" description="Nuclear hormone receptor family member nhr-169">
    <location>
        <begin position="1"/>
        <end position="356"/>
    </location>
</feature>
<feature type="domain" description="NR LBD" evidence="2">
    <location>
        <begin position="144"/>
        <end position="356"/>
    </location>
</feature>
<feature type="DNA-binding region" description="Nuclear receptor" evidence="1">
    <location>
        <begin position="16"/>
        <end position="90"/>
    </location>
</feature>
<feature type="zinc finger region" description="NR C4-type" evidence="1">
    <location>
        <begin position="19"/>
        <end position="40"/>
    </location>
</feature>
<feature type="zinc finger region" description="NR C4-type" evidence="1">
    <location>
        <begin position="56"/>
        <end position="72"/>
    </location>
</feature>
<sequence>MKLSTSLEMPFRESTDPICSVCNFSSLIAPHFGGLVCSACASFFRRTVALNIHYLCKKDNQCKGMRKNCRACRFESCVKIAGMKRSLVKERKNLNNIPLYILNRRNETGNQGVVRAFVSSNQNRLENRLSLSPLTELPINDEMDVSKILKTTPSSLLKYYVEQVSHGKQFYMNTLNIRTKEELFEIVSYQSKVAAETCRTCPGVDLLDNRDILILRKYFQFSNIWIESTWKYWFSNDFSNDTEKFDIKLMEFIGQVKSTLLISLSRLKFNIFEFTAFKAICIWKLVYHETSRAMKIVAQEHYEGVTKALISYYQTYTLLDSMEIAIRVGEITLLVSSVFQMYHDMAKLYLHMGLPF</sequence>
<name>NH169_CAEEL</name>
<organism>
    <name type="scientific">Caenorhabditis elegans</name>
    <dbReference type="NCBI Taxonomy" id="6239"/>
    <lineage>
        <taxon>Eukaryota</taxon>
        <taxon>Metazoa</taxon>
        <taxon>Ecdysozoa</taxon>
        <taxon>Nematoda</taxon>
        <taxon>Chromadorea</taxon>
        <taxon>Rhabditida</taxon>
        <taxon>Rhabditina</taxon>
        <taxon>Rhabditomorpha</taxon>
        <taxon>Rhabditoidea</taxon>
        <taxon>Rhabditidae</taxon>
        <taxon>Peloderinae</taxon>
        <taxon>Caenorhabditis</taxon>
    </lineage>
</organism>
<comment type="function">
    <text>Orphan nuclear receptor.</text>
</comment>
<comment type="subcellular location">
    <subcellularLocation>
        <location evidence="1">Nucleus</location>
    </subcellularLocation>
</comment>
<comment type="similarity">
    <text evidence="3">Belongs to the nuclear hormone receptor family.</text>
</comment>
<protein>
    <recommendedName>
        <fullName>Nuclear hormone receptor family member nhr-169</fullName>
    </recommendedName>
</protein>
<accession>O17706</accession>
<gene>
    <name type="primary">nhr-169</name>
    <name type="ORF">C54C8.1</name>
</gene>